<dbReference type="EC" id="4.1.1.65" evidence="1"/>
<dbReference type="EMBL" id="AP009240">
    <property type="protein sequence ID" value="BAG79984.1"/>
    <property type="molecule type" value="Genomic_DNA"/>
</dbReference>
<dbReference type="SMR" id="B6I267"/>
<dbReference type="KEGG" id="ecy:ECSE_4460"/>
<dbReference type="HOGENOM" id="CLU_029061_4_1_6"/>
<dbReference type="UniPathway" id="UPA00558">
    <property type="reaction ID" value="UER00616"/>
</dbReference>
<dbReference type="Proteomes" id="UP000008199">
    <property type="component" value="Chromosome"/>
</dbReference>
<dbReference type="GO" id="GO:0005886">
    <property type="term" value="C:plasma membrane"/>
    <property type="evidence" value="ECO:0007669"/>
    <property type="project" value="UniProtKB-SubCell"/>
</dbReference>
<dbReference type="GO" id="GO:0004609">
    <property type="term" value="F:phosphatidylserine decarboxylase activity"/>
    <property type="evidence" value="ECO:0007669"/>
    <property type="project" value="UniProtKB-UniRule"/>
</dbReference>
<dbReference type="GO" id="GO:0006646">
    <property type="term" value="P:phosphatidylethanolamine biosynthetic process"/>
    <property type="evidence" value="ECO:0007669"/>
    <property type="project" value="UniProtKB-UniRule"/>
</dbReference>
<dbReference type="HAMAP" id="MF_00662">
    <property type="entry name" value="PS_decarb_PSD_B_type1"/>
    <property type="match status" value="1"/>
</dbReference>
<dbReference type="InterPro" id="IPR003817">
    <property type="entry name" value="PS_Dcarbxylase"/>
</dbReference>
<dbReference type="InterPro" id="IPR033177">
    <property type="entry name" value="PSD-B"/>
</dbReference>
<dbReference type="InterPro" id="IPR033178">
    <property type="entry name" value="PSD_type1_pro"/>
</dbReference>
<dbReference type="NCBIfam" id="TIGR00163">
    <property type="entry name" value="PS_decarb"/>
    <property type="match status" value="1"/>
</dbReference>
<dbReference type="PANTHER" id="PTHR10067">
    <property type="entry name" value="PHOSPHATIDYLSERINE DECARBOXYLASE"/>
    <property type="match status" value="1"/>
</dbReference>
<dbReference type="PANTHER" id="PTHR10067:SF6">
    <property type="entry name" value="PHOSPHATIDYLSERINE DECARBOXYLASE PROENZYME, MITOCHONDRIAL"/>
    <property type="match status" value="1"/>
</dbReference>
<dbReference type="Pfam" id="PF02666">
    <property type="entry name" value="PS_Dcarbxylase"/>
    <property type="match status" value="1"/>
</dbReference>
<comment type="function">
    <text evidence="1">Catalyzes the formation of phosphatidylethanolamine (PtdEtn) from phosphatidylserine (PtdSer).</text>
</comment>
<comment type="catalytic activity">
    <reaction evidence="1">
        <text>a 1,2-diacyl-sn-glycero-3-phospho-L-serine + H(+) = a 1,2-diacyl-sn-glycero-3-phosphoethanolamine + CO2</text>
        <dbReference type="Rhea" id="RHEA:20828"/>
        <dbReference type="ChEBI" id="CHEBI:15378"/>
        <dbReference type="ChEBI" id="CHEBI:16526"/>
        <dbReference type="ChEBI" id="CHEBI:57262"/>
        <dbReference type="ChEBI" id="CHEBI:64612"/>
        <dbReference type="EC" id="4.1.1.65"/>
    </reaction>
</comment>
<comment type="cofactor">
    <cofactor evidence="1">
        <name>pyruvate</name>
        <dbReference type="ChEBI" id="CHEBI:15361"/>
    </cofactor>
    <text evidence="1">Binds 1 pyruvoyl group covalently per subunit.</text>
</comment>
<comment type="pathway">
    <text evidence="1">Phospholipid metabolism; phosphatidylethanolamine biosynthesis; phosphatidylethanolamine from CDP-diacylglycerol: step 2/2.</text>
</comment>
<comment type="subunit">
    <text evidence="1">Heterodimer of a large membrane-associated beta subunit and a small pyruvoyl-containing alpha subunit.</text>
</comment>
<comment type="subcellular location">
    <subcellularLocation>
        <location evidence="1">Cell membrane</location>
        <topology evidence="1">Peripheral membrane protein</topology>
    </subcellularLocation>
</comment>
<comment type="PTM">
    <text evidence="1">Is synthesized initially as an inactive proenzyme. Formation of the active enzyme involves a self-maturation process in which the active site pyruvoyl group is generated from an internal serine residue via an autocatalytic post-translational modification. Two non-identical subunits are generated from the proenzyme in this reaction, and the pyruvate is formed at the N-terminus of the alpha chain, which is derived from the carboxyl end of the proenzyme. The autoendoproteolytic cleavage occurs by a canonical serine protease mechanism, in which the side chain hydroxyl group of the serine supplies its oxygen atom to form the C-terminus of the beta chain, while the remainder of the serine residue undergoes an oxidative deamination to produce ammonia and the pyruvoyl prosthetic group on the alpha chain. During this reaction, the Ser that is part of the protease active site of the proenzyme becomes the pyruvoyl prosthetic group, which constitutes an essential element of the active site of the mature decarboxylase.</text>
</comment>
<comment type="similarity">
    <text evidence="1">Belongs to the phosphatidylserine decarboxylase family. PSD-B subfamily. Prokaryotic type I sub-subfamily.</text>
</comment>
<proteinExistence type="inferred from homology"/>
<protein>
    <recommendedName>
        <fullName evidence="1">Phosphatidylserine decarboxylase proenzyme</fullName>
        <ecNumber evidence="1">4.1.1.65</ecNumber>
    </recommendedName>
    <component>
        <recommendedName>
            <fullName evidence="1">Phosphatidylserine decarboxylase alpha chain</fullName>
        </recommendedName>
    </component>
    <component>
        <recommendedName>
            <fullName evidence="1">Phosphatidylserine decarboxylase beta chain</fullName>
        </recommendedName>
    </component>
</protein>
<keyword id="KW-1003">Cell membrane</keyword>
<keyword id="KW-0210">Decarboxylase</keyword>
<keyword id="KW-0444">Lipid biosynthesis</keyword>
<keyword id="KW-0443">Lipid metabolism</keyword>
<keyword id="KW-0456">Lyase</keyword>
<keyword id="KW-0472">Membrane</keyword>
<keyword id="KW-0594">Phospholipid biosynthesis</keyword>
<keyword id="KW-1208">Phospholipid metabolism</keyword>
<keyword id="KW-0670">Pyruvate</keyword>
<keyword id="KW-0865">Zymogen</keyword>
<evidence type="ECO:0000255" key="1">
    <source>
        <dbReference type="HAMAP-Rule" id="MF_00662"/>
    </source>
</evidence>
<evidence type="ECO:0000256" key="2">
    <source>
        <dbReference type="SAM" id="MobiDB-lite"/>
    </source>
</evidence>
<organism>
    <name type="scientific">Escherichia coli (strain SE11)</name>
    <dbReference type="NCBI Taxonomy" id="409438"/>
    <lineage>
        <taxon>Bacteria</taxon>
        <taxon>Pseudomonadati</taxon>
        <taxon>Pseudomonadota</taxon>
        <taxon>Gammaproteobacteria</taxon>
        <taxon>Enterobacterales</taxon>
        <taxon>Enterobacteriaceae</taxon>
        <taxon>Escherichia</taxon>
    </lineage>
</organism>
<name>PSD_ECOSE</name>
<accession>B6I267</accession>
<reference key="1">
    <citation type="journal article" date="2008" name="DNA Res.">
        <title>Complete genome sequence and comparative analysis of the wild-type commensal Escherichia coli strain SE11 isolated from a healthy adult.</title>
        <authorList>
            <person name="Oshima K."/>
            <person name="Toh H."/>
            <person name="Ogura Y."/>
            <person name="Sasamoto H."/>
            <person name="Morita H."/>
            <person name="Park S.-H."/>
            <person name="Ooka T."/>
            <person name="Iyoda S."/>
            <person name="Taylor T.D."/>
            <person name="Hayashi T."/>
            <person name="Itoh K."/>
            <person name="Hattori M."/>
        </authorList>
    </citation>
    <scope>NUCLEOTIDE SEQUENCE [LARGE SCALE GENOMIC DNA]</scope>
    <source>
        <strain>SE11</strain>
    </source>
</reference>
<feature type="chain" id="PRO_1000131370" description="Phosphatidylserine decarboxylase beta chain" evidence="1">
    <location>
        <begin position="1"/>
        <end position="253"/>
    </location>
</feature>
<feature type="chain" id="PRO_1000131371" description="Phosphatidylserine decarboxylase alpha chain" evidence="1">
    <location>
        <begin position="254"/>
        <end position="322"/>
    </location>
</feature>
<feature type="region of interest" description="Disordered" evidence="2">
    <location>
        <begin position="293"/>
        <end position="322"/>
    </location>
</feature>
<feature type="compositionally biased region" description="Basic and acidic residues" evidence="2">
    <location>
        <begin position="308"/>
        <end position="322"/>
    </location>
</feature>
<feature type="active site" description="Charge relay system; for autoendoproteolytic cleavage activity" evidence="1">
    <location>
        <position position="90"/>
    </location>
</feature>
<feature type="active site" description="Charge relay system; for autoendoproteolytic cleavage activity" evidence="1">
    <location>
        <position position="147"/>
    </location>
</feature>
<feature type="active site" description="Charge relay system; for autoendoproteolytic cleavage activity" evidence="1">
    <location>
        <position position="254"/>
    </location>
</feature>
<feature type="active site" description="Schiff-base intermediate with substrate; via pyruvic acid; for decarboxylase activity" evidence="1">
    <location>
        <position position="254"/>
    </location>
</feature>
<feature type="site" description="Cleavage (non-hydrolytic); by autocatalysis" evidence="1">
    <location>
        <begin position="253"/>
        <end position="254"/>
    </location>
</feature>
<feature type="modified residue" description="Pyruvic acid (Ser); by autocatalysis" evidence="1">
    <location>
        <position position="254"/>
    </location>
</feature>
<gene>
    <name evidence="1" type="primary">psd</name>
    <name type="ordered locus">ECSE_4460</name>
</gene>
<sequence length="322" mass="35934">MLNSFKLSLQYILPKLWLTRLAGWGASKRAGWLTKLVIDLFVKYYKVDMKEAQKPDTASYRTFNEFFVRPLRDEVRPIDTDPNVLVMPADGVISQLGKIEEDKILQAKGHNYSLEALLAGNYLMADLFRNGTFVTTYLSPRDYHRVHMPCNGILREMIYVPGDLFSVNHLTAQNVPNLFARNERVICLFDTEFGPMAQILVGATIVGSIETVWAGTITPPREGIIKRWTWPAGENDGSVALLKGQEMGRFKLGSTVINLFAPGKVNLVEQLESLSVTKIGQPLAVSTETFVTPDAEPAPLPAEEIEAEHDASPLVDDKKDQV</sequence>